<keyword id="KW-0106">Calcium</keyword>
<keyword id="KW-1003">Cell membrane</keyword>
<keyword id="KW-0165">Cleavage on pair of basic residues</keyword>
<keyword id="KW-1015">Disulfide bond</keyword>
<keyword id="KW-0272">Extracellular matrix</keyword>
<keyword id="KW-0325">Glycoprotein</keyword>
<keyword id="KW-0336">GPI-anchor</keyword>
<keyword id="KW-0378">Hydrolase</keyword>
<keyword id="KW-0449">Lipoprotein</keyword>
<keyword id="KW-0472">Membrane</keyword>
<keyword id="KW-0479">Metal-binding</keyword>
<keyword id="KW-0482">Metalloprotease</keyword>
<keyword id="KW-0645">Protease</keyword>
<keyword id="KW-1267">Proteomics identification</keyword>
<keyword id="KW-1185">Reference proteome</keyword>
<keyword id="KW-0677">Repeat</keyword>
<keyword id="KW-0964">Secreted</keyword>
<keyword id="KW-0732">Signal</keyword>
<keyword id="KW-0862">Zinc</keyword>
<keyword id="KW-0865">Zymogen</keyword>
<organism>
    <name type="scientific">Homo sapiens</name>
    <name type="common">Human</name>
    <dbReference type="NCBI Taxonomy" id="9606"/>
    <lineage>
        <taxon>Eukaryota</taxon>
        <taxon>Metazoa</taxon>
        <taxon>Chordata</taxon>
        <taxon>Craniata</taxon>
        <taxon>Vertebrata</taxon>
        <taxon>Euteleostomi</taxon>
        <taxon>Mammalia</taxon>
        <taxon>Eutheria</taxon>
        <taxon>Euarchontoglires</taxon>
        <taxon>Primates</taxon>
        <taxon>Haplorrhini</taxon>
        <taxon>Catarrhini</taxon>
        <taxon>Hominidae</taxon>
        <taxon>Homo</taxon>
    </lineage>
</organism>
<comment type="function">
    <text>May activate progelatinase A.</text>
</comment>
<comment type="cofactor">
    <cofactor evidence="1">
        <name>Zn(2+)</name>
        <dbReference type="ChEBI" id="CHEBI:29105"/>
    </cofactor>
    <text evidence="1">Binds 1 zinc ion per subunit.</text>
</comment>
<comment type="cofactor">
    <cofactor evidence="1">
        <name>Ca(2+)</name>
        <dbReference type="ChEBI" id="CHEBI:29108"/>
    </cofactor>
</comment>
<comment type="interaction">
    <interactant intactId="EBI-12346397">
        <id>Q9NPA2</id>
    </interactant>
    <interactant intactId="EBI-16439278">
        <id>Q6FHY5</id>
        <label>MEOX2</label>
    </interactant>
    <organismsDiffer>false</organismsDiffer>
    <experiments>3</experiments>
</comment>
<comment type="subcellular location">
    <subcellularLocation>
        <location>Cell membrane</location>
        <topology>Lipid-anchor</topology>
        <topology>GPI-anchor</topology>
        <orientation>Extracellular side</orientation>
    </subcellularLocation>
    <subcellularLocation>
        <location>Secreted</location>
        <location>Extracellular space</location>
        <location>Extracellular matrix</location>
    </subcellularLocation>
</comment>
<comment type="tissue specificity">
    <text>Expressed predominantly in leukocytes, lung and spleen. Expressed also in colon carcinoma, astrocytoma and glioblastomas.</text>
</comment>
<comment type="domain">
    <text>The conserved cysteine present in the cysteine-switch motif binds the catalytic zinc ion, thus inhibiting the enzyme. The dissociation of the cysteine from the zinc ion upon the activation-peptide release activates the enzyme.</text>
</comment>
<comment type="PTM">
    <text evidence="1">The precursor is cleaved by a furin endopeptidase.</text>
</comment>
<comment type="similarity">
    <text evidence="5">Belongs to the peptidase M10A family.</text>
</comment>
<protein>
    <recommendedName>
        <fullName>Matrix metalloproteinase-25</fullName>
        <shortName>MMP-25</shortName>
        <ecNumber>3.4.24.-</ecNumber>
    </recommendedName>
    <alternativeName>
        <fullName>Leukolysin</fullName>
    </alternativeName>
    <alternativeName>
        <fullName>Membrane-type matrix metalloproteinase 6</fullName>
        <shortName>MT-MMP 6</shortName>
        <shortName>MTMMP6</shortName>
    </alternativeName>
    <alternativeName>
        <fullName>Membrane-type-6 matrix metalloproteinase</fullName>
        <shortName>MT6-MMP</shortName>
        <shortName>MT6MMP</shortName>
    </alternativeName>
</protein>
<accession>Q9NPA2</accession>
<accession>D3DUA8</accession>
<accession>Q9H3Q0</accession>
<gene>
    <name type="primary">MMP25</name>
    <name type="synonym">MMP20</name>
    <name type="synonym">MMPL1</name>
    <name type="synonym">MT6MMP</name>
</gene>
<feature type="signal peptide" evidence="2">
    <location>
        <begin position="1"/>
        <end position="21"/>
    </location>
</feature>
<feature type="propeptide" id="PRO_0000028852" evidence="1">
    <location>
        <begin position="22"/>
        <end position="107"/>
    </location>
</feature>
<feature type="chain" id="PRO_0000028853" description="Matrix metalloproteinase-25">
    <location>
        <begin position="108"/>
        <end position="539"/>
    </location>
</feature>
<feature type="propeptide" id="PRO_0000028854" description="Removed in mature form" evidence="2">
    <location>
        <begin position="540"/>
        <end position="562"/>
    </location>
</feature>
<feature type="repeat" description="Hemopexin 1">
    <location>
        <begin position="314"/>
        <end position="363"/>
    </location>
</feature>
<feature type="repeat" description="Hemopexin 2">
    <location>
        <begin position="367"/>
        <end position="412"/>
    </location>
</feature>
<feature type="repeat" description="Hemopexin 3">
    <location>
        <begin position="413"/>
        <end position="461"/>
    </location>
</feature>
<feature type="repeat" description="Hemopexin 4">
    <location>
        <begin position="462"/>
        <end position="508"/>
    </location>
</feature>
<feature type="region of interest" description="Disordered" evidence="4">
    <location>
        <begin position="278"/>
        <end position="313"/>
    </location>
</feature>
<feature type="region of interest" description="Disordered" evidence="4">
    <location>
        <begin position="490"/>
        <end position="526"/>
    </location>
</feature>
<feature type="short sequence motif" description="Cysteine switch" evidence="1">
    <location>
        <begin position="88"/>
        <end position="95"/>
    </location>
</feature>
<feature type="compositionally biased region" description="Pro residues" evidence="4">
    <location>
        <begin position="295"/>
        <end position="304"/>
    </location>
</feature>
<feature type="active site" evidence="3">
    <location>
        <position position="234"/>
    </location>
</feature>
<feature type="binding site" description="in inhibited form" evidence="1">
    <location>
        <position position="90"/>
    </location>
    <ligand>
        <name>Zn(2+)</name>
        <dbReference type="ChEBI" id="CHEBI:29105"/>
        <note>catalytic</note>
    </ligand>
</feature>
<feature type="binding site" evidence="3">
    <location>
        <position position="233"/>
    </location>
    <ligand>
        <name>Zn(2+)</name>
        <dbReference type="ChEBI" id="CHEBI:29105"/>
        <note>catalytic</note>
    </ligand>
</feature>
<feature type="binding site" evidence="3">
    <location>
        <position position="237"/>
    </location>
    <ligand>
        <name>Zn(2+)</name>
        <dbReference type="ChEBI" id="CHEBI:29105"/>
        <note>catalytic</note>
    </ligand>
</feature>
<feature type="binding site" evidence="3">
    <location>
        <position position="243"/>
    </location>
    <ligand>
        <name>Zn(2+)</name>
        <dbReference type="ChEBI" id="CHEBI:29105"/>
        <note>catalytic</note>
    </ligand>
</feature>
<feature type="lipid moiety-binding region" description="GPI-anchor amidated alanine" evidence="2">
    <location>
        <position position="539"/>
    </location>
</feature>
<feature type="disulfide bond" evidence="1">
    <location>
        <begin position="317"/>
        <end position="508"/>
    </location>
</feature>
<feature type="sequence conflict" description="In Ref. 3; BAB20584." evidence="5" ref="3">
    <original>P</original>
    <variation>R</variation>
    <location>
        <position position="47"/>
    </location>
</feature>
<sequence length="562" mass="62554">MRLRLRLLALLLLLLAPPARAPKPSAQDVSLGVDWLTRYGYLPPPHPAQAQLQSPEKLRDAIKVMQRFAGLPETGRMDPGTVATMRKPRCSLPDVLGVAGLVRRRRRYALSGSVWKKRTLTWRVRSFPQSSQLSQETVRVLMSYALMAWGMESGLTFHEVDSPQGQEPDILIDFARAFHQDSYPFDGLGGTLAHAFFPGEHPISGDTHFDDEETWTFGSKDGEGTDLFAVAVHEFGHALGLGHSSAPNSIMRPFYQGPVGDPDKYRLSQDDRDGLQQLYGKAPQTPYDKPTRKPLAPPPQPPASPTHSPSFPIPDRCEGNFDAIANIRGETFFFKGPWFWRLQPSGQLVSPRPARLHRFWEGLPAQVRVVQAAYARHRDGRILLFSGPQFWVFQDRQLEGGARPLTELGLPPGEEVDAVFSWPQNGKTYLVRGRQYWRYDEAAARPDPGYPRDLSLWEGAPPSPDDVTVSNAGDTYFFKGAHYWRFPKNSIKTEPDAPQPMGPNWLDCPAPSSGPRAPRPPKATPVSETCDCQCELNQAAGRWPAPIPLLLLPLLVGGVASR</sequence>
<name>MMP25_HUMAN</name>
<evidence type="ECO:0000250" key="1"/>
<evidence type="ECO:0000255" key="2"/>
<evidence type="ECO:0000255" key="3">
    <source>
        <dbReference type="PROSITE-ProRule" id="PRU10095"/>
    </source>
</evidence>
<evidence type="ECO:0000256" key="4">
    <source>
        <dbReference type="SAM" id="MobiDB-lite"/>
    </source>
</evidence>
<evidence type="ECO:0000305" key="5"/>
<reference key="1">
    <citation type="journal article" date="2000" name="Cancer Res.">
        <title>Human MT6-matrix metalloproteinase: identification, progelatinase A activation, and expression in brain tumors.</title>
        <authorList>
            <person name="Velasco G."/>
            <person name="Cal S."/>
            <person name="Merlos-Suarez A."/>
            <person name="Ferrando A.A."/>
            <person name="Alvarez S."/>
            <person name="Nakano A."/>
            <person name="Arribas J."/>
            <person name="Lopez-Otin C."/>
        </authorList>
    </citation>
    <scope>NUCLEOTIDE SEQUENCE [MRNA]</scope>
    <source>
        <tissue>Fetal liver</tissue>
    </source>
</reference>
<reference key="2">
    <citation type="journal article" date="1999" name="Cell Res.">
        <title>Leukolysin/MMP25/MT6-MMP: a novel matrix metalloproteinase specifically expressed in the leukocyte lineage.</title>
        <authorList>
            <person name="Pei D.Q."/>
        </authorList>
    </citation>
    <scope>NUCLEOTIDE SEQUENCE [MRNA]</scope>
</reference>
<reference key="3">
    <citation type="journal article" date="2000" name="FEBS Lett.">
        <title>Membrane-type 6 matrix metalloproteinase (MT6-MMP, MMP-25) is the second glycosyl-phosphatidyl inositol (GPI)-anchored MMP.</title>
        <authorList>
            <person name="Kojima S."/>
            <person name="Itoh Y."/>
            <person name="Matsumoto S."/>
            <person name="Masuho Y."/>
            <person name="Seiki M."/>
        </authorList>
    </citation>
    <scope>NUCLEOTIDE SEQUENCE [MRNA]</scope>
    <scope>GPI-ANCHOR</scope>
</reference>
<reference key="4">
    <citation type="submission" date="2000-02" db="EMBL/GenBank/DDBJ databases">
        <title>Molecular cloning of a novel human membrane-type matrix metalloproteinase (MT-MMP) predominantly expressed in dendritic cells.</title>
        <authorList>
            <person name="de Saint-Vis B.M."/>
            <person name="Clair-Moninot V.A."/>
            <person name="Lambert C.A."/>
            <person name="Vanbervliet B."/>
            <person name="Pin J.J."/>
            <person name="Chalus L."/>
            <person name="Ait-Yahia S."/>
            <person name="Caux C."/>
            <person name="Richelle-Nusgens B.V."/>
            <person name="Fossiez F."/>
            <person name="Lebecque S."/>
        </authorList>
    </citation>
    <scope>NUCLEOTIDE SEQUENCE [MRNA]</scope>
</reference>
<reference key="5">
    <citation type="submission" date="2005-09" db="EMBL/GenBank/DDBJ databases">
        <authorList>
            <person name="Mural R.J."/>
            <person name="Istrail S."/>
            <person name="Sutton G.G."/>
            <person name="Florea L."/>
            <person name="Halpern A.L."/>
            <person name="Mobarry C.M."/>
            <person name="Lippert R."/>
            <person name="Walenz B."/>
            <person name="Shatkay H."/>
            <person name="Dew I."/>
            <person name="Miller J.R."/>
            <person name="Flanigan M.J."/>
            <person name="Edwards N.J."/>
            <person name="Bolanos R."/>
            <person name="Fasulo D."/>
            <person name="Halldorsson B.V."/>
            <person name="Hannenhalli S."/>
            <person name="Turner R."/>
            <person name="Yooseph S."/>
            <person name="Lu F."/>
            <person name="Nusskern D.R."/>
            <person name="Shue B.C."/>
            <person name="Zheng X.H."/>
            <person name="Zhong F."/>
            <person name="Delcher A.L."/>
            <person name="Huson D.H."/>
            <person name="Kravitz S.A."/>
            <person name="Mouchard L."/>
            <person name="Reinert K."/>
            <person name="Remington K.A."/>
            <person name="Clark A.G."/>
            <person name="Waterman M.S."/>
            <person name="Eichler E.E."/>
            <person name="Adams M.D."/>
            <person name="Hunkapiller M.W."/>
            <person name="Myers E.W."/>
            <person name="Venter J.C."/>
        </authorList>
    </citation>
    <scope>NUCLEOTIDE SEQUENCE [LARGE SCALE GENOMIC DNA]</scope>
</reference>
<proteinExistence type="evidence at protein level"/>
<dbReference type="EC" id="3.4.24.-"/>
<dbReference type="EMBL" id="AJ239053">
    <property type="protein sequence ID" value="CAB94713.1"/>
    <property type="molecule type" value="mRNA"/>
</dbReference>
<dbReference type="EMBL" id="AF145442">
    <property type="protein sequence ID" value="AAF66697.2"/>
    <property type="molecule type" value="mRNA"/>
</dbReference>
<dbReference type="EMBL" id="AF185270">
    <property type="protein sequence ID" value="AAG17007.1"/>
    <property type="molecule type" value="mRNA"/>
</dbReference>
<dbReference type="EMBL" id="AB042328">
    <property type="protein sequence ID" value="BAB20584.1"/>
    <property type="molecule type" value="mRNA"/>
</dbReference>
<dbReference type="EMBL" id="AJ272137">
    <property type="protein sequence ID" value="CAC03490.1"/>
    <property type="molecule type" value="mRNA"/>
</dbReference>
<dbReference type="EMBL" id="CH471112">
    <property type="protein sequence ID" value="EAW85413.1"/>
    <property type="molecule type" value="Genomic_DNA"/>
</dbReference>
<dbReference type="EMBL" id="CH471112">
    <property type="protein sequence ID" value="EAW85415.1"/>
    <property type="molecule type" value="Genomic_DNA"/>
</dbReference>
<dbReference type="CCDS" id="CCDS10492.1"/>
<dbReference type="RefSeq" id="NP_071913.1">
    <property type="nucleotide sequence ID" value="NM_022468.5"/>
</dbReference>
<dbReference type="SMR" id="Q9NPA2"/>
<dbReference type="BioGRID" id="122149">
    <property type="interactions" value="18"/>
</dbReference>
<dbReference type="FunCoup" id="Q9NPA2">
    <property type="interactions" value="125"/>
</dbReference>
<dbReference type="IntAct" id="Q9NPA2">
    <property type="interactions" value="3"/>
</dbReference>
<dbReference type="STRING" id="9606.ENSP00000337816"/>
<dbReference type="BindingDB" id="Q9NPA2"/>
<dbReference type="ChEMBL" id="CHEMBL1795103"/>
<dbReference type="DrugBank" id="DB01039">
    <property type="generic name" value="Fenofibrate"/>
</dbReference>
<dbReference type="DrugBank" id="DB13873">
    <property type="generic name" value="Fenofibric acid"/>
</dbReference>
<dbReference type="DrugBank" id="DB00786">
    <property type="generic name" value="Marimastat"/>
</dbReference>
<dbReference type="GuidetoPHARMACOLOGY" id="1647"/>
<dbReference type="MEROPS" id="M10.024"/>
<dbReference type="GlyCosmos" id="Q9NPA2">
    <property type="glycosylation" value="1 site, 1 glycan"/>
</dbReference>
<dbReference type="GlyGen" id="Q9NPA2">
    <property type="glycosylation" value="1 site, 1 O-linked glycan (1 site)"/>
</dbReference>
<dbReference type="iPTMnet" id="Q9NPA2"/>
<dbReference type="PhosphoSitePlus" id="Q9NPA2"/>
<dbReference type="BioMuta" id="MMP25"/>
<dbReference type="DMDM" id="12585274"/>
<dbReference type="MassIVE" id="Q9NPA2"/>
<dbReference type="PaxDb" id="9606-ENSP00000337816"/>
<dbReference type="PeptideAtlas" id="Q9NPA2"/>
<dbReference type="ProteomicsDB" id="81949"/>
<dbReference type="Antibodypedia" id="10685">
    <property type="antibodies" value="303 antibodies from 30 providers"/>
</dbReference>
<dbReference type="DNASU" id="64386"/>
<dbReference type="Ensembl" id="ENST00000336577.9">
    <property type="protein sequence ID" value="ENSP00000337816.4"/>
    <property type="gene ID" value="ENSG00000008516.19"/>
</dbReference>
<dbReference type="Ensembl" id="ENST00000850602.1">
    <property type="protein sequence ID" value="ENSP00000520889.1"/>
    <property type="gene ID" value="ENSG00000008516.19"/>
</dbReference>
<dbReference type="GeneID" id="64386"/>
<dbReference type="KEGG" id="hsa:64386"/>
<dbReference type="MANE-Select" id="ENST00000336577.9">
    <property type="protein sequence ID" value="ENSP00000337816.4"/>
    <property type="RefSeq nucleotide sequence ID" value="NM_022468.5"/>
    <property type="RefSeq protein sequence ID" value="NP_071913.1"/>
</dbReference>
<dbReference type="UCSC" id="uc002cth.4">
    <property type="organism name" value="human"/>
</dbReference>
<dbReference type="AGR" id="HGNC:14246"/>
<dbReference type="CTD" id="64386"/>
<dbReference type="DisGeNET" id="64386"/>
<dbReference type="GeneCards" id="MMP25"/>
<dbReference type="HGNC" id="HGNC:14246">
    <property type="gene designation" value="MMP25"/>
</dbReference>
<dbReference type="HPA" id="ENSG00000008516">
    <property type="expression patterns" value="Group enriched (bone marrow, lymphoid tissue)"/>
</dbReference>
<dbReference type="MIM" id="608482">
    <property type="type" value="gene"/>
</dbReference>
<dbReference type="neXtProt" id="NX_Q9NPA2"/>
<dbReference type="OpenTargets" id="ENSG00000008516"/>
<dbReference type="PharmGKB" id="PA30882"/>
<dbReference type="VEuPathDB" id="HostDB:ENSG00000008516"/>
<dbReference type="eggNOG" id="KOG1565">
    <property type="taxonomic scope" value="Eukaryota"/>
</dbReference>
<dbReference type="GeneTree" id="ENSGT00940000159799"/>
<dbReference type="HOGENOM" id="CLU_015489_8_2_1"/>
<dbReference type="InParanoid" id="Q9NPA2"/>
<dbReference type="OMA" id="PYYQGSV"/>
<dbReference type="OrthoDB" id="406838at2759"/>
<dbReference type="PAN-GO" id="Q9NPA2">
    <property type="GO annotations" value="3 GO annotations based on evolutionary models"/>
</dbReference>
<dbReference type="PhylomeDB" id="Q9NPA2"/>
<dbReference type="TreeFam" id="TF315428"/>
<dbReference type="PathwayCommons" id="Q9NPA2"/>
<dbReference type="Reactome" id="R-HSA-1592389">
    <property type="pathway name" value="Activation of Matrix Metalloproteinases"/>
</dbReference>
<dbReference type="Reactome" id="R-HSA-6798695">
    <property type="pathway name" value="Neutrophil degranulation"/>
</dbReference>
<dbReference type="SignaLink" id="Q9NPA2"/>
<dbReference type="SIGNOR" id="Q9NPA2"/>
<dbReference type="BioGRID-ORCS" id="64386">
    <property type="hits" value="21 hits in 1151 CRISPR screens"/>
</dbReference>
<dbReference type="GeneWiki" id="MMP25"/>
<dbReference type="GenomeRNAi" id="64386"/>
<dbReference type="Pharos" id="Q9NPA2">
    <property type="development level" value="Tchem"/>
</dbReference>
<dbReference type="PRO" id="PR:Q9NPA2"/>
<dbReference type="Proteomes" id="UP000005640">
    <property type="component" value="Chromosome 16"/>
</dbReference>
<dbReference type="RNAct" id="Q9NPA2">
    <property type="molecule type" value="protein"/>
</dbReference>
<dbReference type="Bgee" id="ENSG00000008516">
    <property type="expression patterns" value="Expressed in blood and 159 other cell types or tissues"/>
</dbReference>
<dbReference type="ExpressionAtlas" id="Q9NPA2">
    <property type="expression patterns" value="baseline and differential"/>
</dbReference>
<dbReference type="GO" id="GO:0031012">
    <property type="term" value="C:extracellular matrix"/>
    <property type="evidence" value="ECO:0000303"/>
    <property type="project" value="UniProtKB"/>
</dbReference>
<dbReference type="GO" id="GO:0005615">
    <property type="term" value="C:extracellular space"/>
    <property type="evidence" value="ECO:0000318"/>
    <property type="project" value="GO_Central"/>
</dbReference>
<dbReference type="GO" id="GO:0016020">
    <property type="term" value="C:membrane"/>
    <property type="evidence" value="ECO:0000303"/>
    <property type="project" value="UniProtKB"/>
</dbReference>
<dbReference type="GO" id="GO:0005886">
    <property type="term" value="C:plasma membrane"/>
    <property type="evidence" value="ECO:0000314"/>
    <property type="project" value="HPA"/>
</dbReference>
<dbReference type="GO" id="GO:0098552">
    <property type="term" value="C:side of membrane"/>
    <property type="evidence" value="ECO:0007669"/>
    <property type="project" value="UniProtKB-KW"/>
</dbReference>
<dbReference type="GO" id="GO:0035579">
    <property type="term" value="C:specific granule membrane"/>
    <property type="evidence" value="ECO:0000304"/>
    <property type="project" value="Reactome"/>
</dbReference>
<dbReference type="GO" id="GO:0004222">
    <property type="term" value="F:metalloendopeptidase activity"/>
    <property type="evidence" value="ECO:0000318"/>
    <property type="project" value="GO_Central"/>
</dbReference>
<dbReference type="GO" id="GO:0008270">
    <property type="term" value="F:zinc ion binding"/>
    <property type="evidence" value="ECO:0007669"/>
    <property type="project" value="InterPro"/>
</dbReference>
<dbReference type="GO" id="GO:0030574">
    <property type="term" value="P:collagen catabolic process"/>
    <property type="evidence" value="ECO:0000318"/>
    <property type="project" value="GO_Central"/>
</dbReference>
<dbReference type="GO" id="GO:0030198">
    <property type="term" value="P:extracellular matrix organization"/>
    <property type="evidence" value="ECO:0000318"/>
    <property type="project" value="GO_Central"/>
</dbReference>
<dbReference type="GO" id="GO:0060022">
    <property type="term" value="P:hard palate development"/>
    <property type="evidence" value="ECO:0007669"/>
    <property type="project" value="Ensembl"/>
</dbReference>
<dbReference type="GO" id="GO:0006954">
    <property type="term" value="P:inflammatory response"/>
    <property type="evidence" value="ECO:0000303"/>
    <property type="project" value="UniProtKB"/>
</dbReference>
<dbReference type="GO" id="GO:0006508">
    <property type="term" value="P:proteolysis"/>
    <property type="evidence" value="ECO:0000303"/>
    <property type="project" value="UniProtKB"/>
</dbReference>
<dbReference type="CDD" id="cd00094">
    <property type="entry name" value="HX"/>
    <property type="match status" value="1"/>
</dbReference>
<dbReference type="CDD" id="cd04278">
    <property type="entry name" value="ZnMc_MMP"/>
    <property type="match status" value="1"/>
</dbReference>
<dbReference type="FunFam" id="3.40.390.10:FF:000016">
    <property type="entry name" value="Matrix metallopeptidase 17"/>
    <property type="match status" value="1"/>
</dbReference>
<dbReference type="FunFam" id="2.110.10.10:FF:000016">
    <property type="entry name" value="Matrix metallopeptidase 25"/>
    <property type="match status" value="1"/>
</dbReference>
<dbReference type="Gene3D" id="3.40.390.10">
    <property type="entry name" value="Collagenase (Catalytic Domain)"/>
    <property type="match status" value="1"/>
</dbReference>
<dbReference type="Gene3D" id="2.110.10.10">
    <property type="entry name" value="Hemopexin-like domain"/>
    <property type="match status" value="1"/>
</dbReference>
<dbReference type="InterPro" id="IPR000585">
    <property type="entry name" value="Hemopexin-like_dom"/>
</dbReference>
<dbReference type="InterPro" id="IPR036375">
    <property type="entry name" value="Hemopexin-like_dom_sf"/>
</dbReference>
<dbReference type="InterPro" id="IPR018487">
    <property type="entry name" value="Hemopexin-like_repeat"/>
</dbReference>
<dbReference type="InterPro" id="IPR033739">
    <property type="entry name" value="M10A_MMP"/>
</dbReference>
<dbReference type="InterPro" id="IPR024079">
    <property type="entry name" value="MetalloPept_cat_dom_sf"/>
</dbReference>
<dbReference type="InterPro" id="IPR001818">
    <property type="entry name" value="Pept_M10_metallopeptidase"/>
</dbReference>
<dbReference type="InterPro" id="IPR021190">
    <property type="entry name" value="Pept_M10A"/>
</dbReference>
<dbReference type="InterPro" id="IPR006026">
    <property type="entry name" value="Peptidase_Metallo"/>
</dbReference>
<dbReference type="InterPro" id="IPR002477">
    <property type="entry name" value="Peptidoglycan-bd-like"/>
</dbReference>
<dbReference type="PANTHER" id="PTHR10201">
    <property type="entry name" value="MATRIX METALLOPROTEINASE"/>
    <property type="match status" value="1"/>
</dbReference>
<dbReference type="PANTHER" id="PTHR10201:SF142">
    <property type="entry name" value="MATRIX METALLOPROTEINASE-25"/>
    <property type="match status" value="1"/>
</dbReference>
<dbReference type="Pfam" id="PF00045">
    <property type="entry name" value="Hemopexin"/>
    <property type="match status" value="4"/>
</dbReference>
<dbReference type="Pfam" id="PF00413">
    <property type="entry name" value="Peptidase_M10"/>
    <property type="match status" value="1"/>
</dbReference>
<dbReference type="Pfam" id="PF01471">
    <property type="entry name" value="PG_binding_1"/>
    <property type="match status" value="1"/>
</dbReference>
<dbReference type="PIRSF" id="PIRSF001191">
    <property type="entry name" value="Peptidase_M10A_matrix"/>
    <property type="match status" value="1"/>
</dbReference>
<dbReference type="PRINTS" id="PR00138">
    <property type="entry name" value="MATRIXIN"/>
</dbReference>
<dbReference type="SMART" id="SM00120">
    <property type="entry name" value="HX"/>
    <property type="match status" value="4"/>
</dbReference>
<dbReference type="SMART" id="SM00235">
    <property type="entry name" value="ZnMc"/>
    <property type="match status" value="1"/>
</dbReference>
<dbReference type="SUPFAM" id="SSF50923">
    <property type="entry name" value="Hemopexin-like domain"/>
    <property type="match status" value="1"/>
</dbReference>
<dbReference type="SUPFAM" id="SSF55486">
    <property type="entry name" value="Metalloproteases ('zincins'), catalytic domain"/>
    <property type="match status" value="1"/>
</dbReference>
<dbReference type="PROSITE" id="PS51642">
    <property type="entry name" value="HEMOPEXIN_2"/>
    <property type="match status" value="4"/>
</dbReference>
<dbReference type="PROSITE" id="PS00142">
    <property type="entry name" value="ZINC_PROTEASE"/>
    <property type="match status" value="1"/>
</dbReference>